<keyword id="KW-0133">Cell shape</keyword>
<keyword id="KW-0961">Cell wall biogenesis/degradation</keyword>
<keyword id="KW-0903">Direct protein sequencing</keyword>
<keyword id="KW-0413">Isomerase</keyword>
<keyword id="KW-0573">Peptidoglycan synthesis</keyword>
<proteinExistence type="evidence at protein level"/>
<accession>Q03469</accession>
<dbReference type="EC" id="5.1.1.3" evidence="2 3 4 5"/>
<dbReference type="EMBL" id="L02916">
    <property type="protein sequence ID" value="AAA25241.1"/>
    <property type="molecule type" value="Genomic_DNA"/>
</dbReference>
<dbReference type="PIR" id="A49473">
    <property type="entry name" value="A49473"/>
</dbReference>
<dbReference type="RefSeq" id="WP_012390977.1">
    <property type="nucleotide sequence ID" value="NZ_SMZH01000019.1"/>
</dbReference>
<dbReference type="SMR" id="Q03469"/>
<dbReference type="STRING" id="1613.GCA_002119645_00593"/>
<dbReference type="BindingDB" id="Q03469"/>
<dbReference type="ChEMBL" id="CHEMBL3353"/>
<dbReference type="DrugCentral" id="Q03469"/>
<dbReference type="PATRIC" id="fig|1613.34.peg.2476"/>
<dbReference type="BRENDA" id="5.1.1.3">
    <property type="organism ID" value="2856"/>
</dbReference>
<dbReference type="SABIO-RK" id="Q03469"/>
<dbReference type="UniPathway" id="UPA00219"/>
<dbReference type="PRO" id="PR:Q03469"/>
<dbReference type="GO" id="GO:0008881">
    <property type="term" value="F:glutamate racemase activity"/>
    <property type="evidence" value="ECO:0007669"/>
    <property type="project" value="UniProtKB-UniRule"/>
</dbReference>
<dbReference type="GO" id="GO:0071555">
    <property type="term" value="P:cell wall organization"/>
    <property type="evidence" value="ECO:0007669"/>
    <property type="project" value="UniProtKB-KW"/>
</dbReference>
<dbReference type="GO" id="GO:0009252">
    <property type="term" value="P:peptidoglycan biosynthetic process"/>
    <property type="evidence" value="ECO:0007669"/>
    <property type="project" value="UniProtKB-UniRule"/>
</dbReference>
<dbReference type="GO" id="GO:0008360">
    <property type="term" value="P:regulation of cell shape"/>
    <property type="evidence" value="ECO:0007669"/>
    <property type="project" value="UniProtKB-KW"/>
</dbReference>
<dbReference type="FunFam" id="3.40.50.1860:FF:000002">
    <property type="entry name" value="Glutamate racemase"/>
    <property type="match status" value="1"/>
</dbReference>
<dbReference type="Gene3D" id="3.40.50.1860">
    <property type="match status" value="2"/>
</dbReference>
<dbReference type="HAMAP" id="MF_00258">
    <property type="entry name" value="Glu_racemase"/>
    <property type="match status" value="1"/>
</dbReference>
<dbReference type="InterPro" id="IPR015942">
    <property type="entry name" value="Asp/Glu/hydantoin_racemase"/>
</dbReference>
<dbReference type="InterPro" id="IPR001920">
    <property type="entry name" value="Asp/Glu_race"/>
</dbReference>
<dbReference type="InterPro" id="IPR018187">
    <property type="entry name" value="Asp/Glu_racemase_AS_1"/>
</dbReference>
<dbReference type="InterPro" id="IPR033134">
    <property type="entry name" value="Asp/Glu_racemase_AS_2"/>
</dbReference>
<dbReference type="InterPro" id="IPR004391">
    <property type="entry name" value="Glu_race"/>
</dbReference>
<dbReference type="NCBIfam" id="TIGR00067">
    <property type="entry name" value="glut_race"/>
    <property type="match status" value="1"/>
</dbReference>
<dbReference type="PANTHER" id="PTHR21198">
    <property type="entry name" value="GLUTAMATE RACEMASE"/>
    <property type="match status" value="1"/>
</dbReference>
<dbReference type="PANTHER" id="PTHR21198:SF2">
    <property type="entry name" value="GLUTAMATE RACEMASE"/>
    <property type="match status" value="1"/>
</dbReference>
<dbReference type="Pfam" id="PF01177">
    <property type="entry name" value="Asp_Glu_race"/>
    <property type="match status" value="1"/>
</dbReference>
<dbReference type="SUPFAM" id="SSF53681">
    <property type="entry name" value="Aspartate/glutamate racemase"/>
    <property type="match status" value="2"/>
</dbReference>
<dbReference type="PROSITE" id="PS00923">
    <property type="entry name" value="ASP_GLU_RACEMASE_1"/>
    <property type="match status" value="1"/>
</dbReference>
<dbReference type="PROSITE" id="PS00924">
    <property type="entry name" value="ASP_GLU_RACEMASE_2"/>
    <property type="match status" value="1"/>
</dbReference>
<evidence type="ECO:0000250" key="1">
    <source>
        <dbReference type="UniProtKB" id="P22634"/>
    </source>
</evidence>
<evidence type="ECO:0000255" key="2">
    <source>
        <dbReference type="HAMAP-Rule" id="MF_00258"/>
    </source>
</evidence>
<evidence type="ECO:0000269" key="3">
    <source>
    </source>
</evidence>
<evidence type="ECO:0000269" key="4">
    <source>
    </source>
</evidence>
<evidence type="ECO:0000269" key="5">
    <source>
    </source>
</evidence>
<name>MURI_LIMFE</name>
<feature type="chain" id="PRO_0000095479" description="Glutamate racemase">
    <location>
        <begin position="1"/>
        <end position="268"/>
    </location>
</feature>
<feature type="active site" description="Proton donor/acceptor" evidence="2 3 4">
    <location>
        <position position="73"/>
    </location>
</feature>
<feature type="active site" description="Proton donor/acceptor" evidence="2 3 4">
    <location>
        <position position="184"/>
    </location>
</feature>
<feature type="binding site" evidence="1 2">
    <location>
        <begin position="10"/>
        <end position="11"/>
    </location>
    <ligand>
        <name>substrate</name>
    </ligand>
</feature>
<feature type="binding site" evidence="1 2">
    <location>
        <begin position="42"/>
        <end position="43"/>
    </location>
    <ligand>
        <name>substrate</name>
    </ligand>
</feature>
<feature type="binding site" evidence="1 2">
    <location>
        <begin position="74"/>
        <end position="75"/>
    </location>
    <ligand>
        <name>substrate</name>
    </ligand>
</feature>
<feature type="binding site" evidence="1 2">
    <location>
        <begin position="185"/>
        <end position="186"/>
    </location>
    <ligand>
        <name>substrate</name>
    </ligand>
</feature>
<feature type="mutagenesis site" description="Abolishes racemase activity." evidence="4">
    <original>C</original>
    <variation>A</variation>
    <location>
        <position position="73"/>
    </location>
</feature>
<feature type="mutagenesis site" description="Reduces racemase activity 1000-fold." evidence="3">
    <original>C</original>
    <variation>S</variation>
    <location>
        <position position="73"/>
    </location>
</feature>
<feature type="mutagenesis site" description="Abolishes racemase activity." evidence="4">
    <original>C</original>
    <variation>A</variation>
    <location>
        <position position="184"/>
    </location>
</feature>
<feature type="mutagenesis site" description="Reduces racemase activity 1000-fold." evidence="3">
    <original>C</original>
    <variation>S</variation>
    <location>
        <position position="184"/>
    </location>
</feature>
<sequence length="268" mass="28314">MDNRPIGVMDSGLGGLSVVRVIQQKLPNEEVIFVGDQGHFPYGTKDQAEVRQLALSIGAFLLKHDVKMMVVACNTATAAALPALQAALPIPVIGVIEPGARAALAQDKKGPIGVIATTATTTAGAYPATIERLAPGTPVIAKATQPMVEIVEHGQTGTAKAQEVVSEQLMTFKEHPVKTLIMGCTHFPFLAPEISKAVGPTVALVDPAKETVATAKSWLEQHQAMGNHAHPNYHLYSTGNLPDLRAGVNKWLLSGHFDLGTAQIEEGD</sequence>
<gene>
    <name evidence="2" type="primary">murI</name>
</gene>
<comment type="function">
    <text evidence="2">Provides the (R)-glutamate required for cell wall biosynthesis.</text>
</comment>
<comment type="catalytic activity">
    <reaction evidence="2 3 4 5">
        <text>L-glutamate = D-glutamate</text>
        <dbReference type="Rhea" id="RHEA:12813"/>
        <dbReference type="ChEBI" id="CHEBI:29985"/>
        <dbReference type="ChEBI" id="CHEBI:29986"/>
        <dbReference type="EC" id="5.1.1.3"/>
    </reaction>
</comment>
<comment type="biophysicochemical properties">
    <kinetics>
        <KM evidence="5">0.25 mM for (R)-glutamate</KM>
    </kinetics>
</comment>
<comment type="pathway">
    <text evidence="2">Cell wall biogenesis; peptidoglycan biosynthesis.</text>
</comment>
<comment type="subunit">
    <text evidence="5">Monomer.</text>
</comment>
<comment type="similarity">
    <text evidence="2">Belongs to the aspartate/glutamate racemases family.</text>
</comment>
<reference key="1">
    <citation type="journal article" date="1993" name="Biochemistry">
        <title>Purification, cloning, and cofactor independence of glutamate racemase from Lactobacillus.</title>
        <authorList>
            <person name="Gallo K.A."/>
            <person name="Knowles J.R."/>
        </authorList>
    </citation>
    <scope>NUCLEOTIDE SEQUENCE [GENOMIC DNA]</scope>
    <scope>PARTIAL PROTEIN SEQUENCE</scope>
    <scope>CATALYTIC ACTIVITY</scope>
    <scope>SUBUNIT</scope>
    <scope>BIOPHYSICOCHEMICAL PROPERTIES</scope>
    <source>
        <strain>ATCC 9338 / DSM 20391 / JCM 1560 / NBRC 3071 / NCDO 215 / NCIMB 8028 / NCTC 6991 / 36</strain>
    </source>
</reference>
<reference key="2">
    <citation type="journal article" date="1993" name="Biochemistry">
        <title>Isotope effects and the identification of catalytic residues in the reaction catalyzed by glutamate racemase.</title>
        <authorList>
            <person name="Tanner M.E."/>
            <person name="Gallo K.A."/>
            <person name="Knowles J.R."/>
        </authorList>
    </citation>
    <scope>CATALYTIC ACTIVITY</scope>
    <scope>ACTIVE SITE</scope>
    <scope>MUTAGENESIS OF CYS-73 AND CYS-184</scope>
</reference>
<reference key="3">
    <citation type="journal article" date="1999" name="Biochemistry">
        <title>Catalytic acid/base residues of glutamate racemase.</title>
        <authorList>
            <person name="Glavas S."/>
            <person name="Tanner M.E."/>
        </authorList>
    </citation>
    <scope>CATALYTIC ACTIVITY</scope>
    <scope>ACTIVE SITE</scope>
    <scope>MUTAGENESIS OF CYS-73 AND CYS-184</scope>
</reference>
<organism>
    <name type="scientific">Limosilactobacillus fermentum</name>
    <name type="common">Lactobacillus fermentum</name>
    <dbReference type="NCBI Taxonomy" id="1613"/>
    <lineage>
        <taxon>Bacteria</taxon>
        <taxon>Bacillati</taxon>
        <taxon>Bacillota</taxon>
        <taxon>Bacilli</taxon>
        <taxon>Lactobacillales</taxon>
        <taxon>Lactobacillaceae</taxon>
        <taxon>Limosilactobacillus</taxon>
    </lineage>
</organism>
<protein>
    <recommendedName>
        <fullName evidence="2">Glutamate racemase</fullName>
        <ecNumber evidence="2 3 4 5">5.1.1.3</ecNumber>
    </recommendedName>
</protein>